<dbReference type="EC" id="3.1.1.11"/>
<dbReference type="EMBL" id="AL035525">
    <property type="protein sequence ID" value="CAB36796.1"/>
    <property type="status" value="ALT_SEQ"/>
    <property type="molecule type" value="Genomic_DNA"/>
</dbReference>
<dbReference type="EMBL" id="AL161583">
    <property type="protein sequence ID" value="CAB80039.1"/>
    <property type="status" value="ALT_SEQ"/>
    <property type="molecule type" value="Genomic_DNA"/>
</dbReference>
<dbReference type="EMBL" id="CP002687">
    <property type="protein sequence ID" value="AEE86192.1"/>
    <property type="molecule type" value="Genomic_DNA"/>
</dbReference>
<dbReference type="EMBL" id="AF378892">
    <property type="protein sequence ID" value="AAK55695.1"/>
    <property type="molecule type" value="mRNA"/>
</dbReference>
<dbReference type="EMBL" id="BT029770">
    <property type="protein sequence ID" value="ABM06040.1"/>
    <property type="molecule type" value="mRNA"/>
</dbReference>
<dbReference type="EMBL" id="AK222013">
    <property type="protein sequence ID" value="BAD94663.1"/>
    <property type="status" value="ALT_INIT"/>
    <property type="molecule type" value="mRNA"/>
</dbReference>
<dbReference type="PIR" id="T05202">
    <property type="entry name" value="T05202"/>
</dbReference>
<dbReference type="RefSeq" id="NP_001328318.1">
    <property type="nucleotide sequence ID" value="NM_001342204.1"/>
</dbReference>
<dbReference type="RefSeq" id="NP_567917.4">
    <property type="nucleotide sequence ID" value="NM_119476.7"/>
</dbReference>
<dbReference type="SMR" id="Q9SMY7"/>
<dbReference type="FunCoup" id="Q9SMY7">
    <property type="interactions" value="172"/>
</dbReference>
<dbReference type="STRING" id="3702.Q9SMY7"/>
<dbReference type="GlyCosmos" id="Q9SMY7">
    <property type="glycosylation" value="8 sites, No reported glycans"/>
</dbReference>
<dbReference type="GlyGen" id="Q9SMY7">
    <property type="glycosylation" value="8 sites"/>
</dbReference>
<dbReference type="iPTMnet" id="Q9SMY7"/>
<dbReference type="PaxDb" id="3702-AT4G33220.1"/>
<dbReference type="ProteomicsDB" id="226151"/>
<dbReference type="EnsemblPlants" id="AT4G33220.1">
    <property type="protein sequence ID" value="AT4G33220.1"/>
    <property type="gene ID" value="AT4G33220"/>
</dbReference>
<dbReference type="GeneID" id="829458"/>
<dbReference type="Gramene" id="AT4G33220.1">
    <property type="protein sequence ID" value="AT4G33220.1"/>
    <property type="gene ID" value="AT4G33220"/>
</dbReference>
<dbReference type="KEGG" id="ath:AT4G33220"/>
<dbReference type="Araport" id="AT4G33220"/>
<dbReference type="TAIR" id="AT4G33220">
    <property type="gene designation" value="PME44"/>
</dbReference>
<dbReference type="eggNOG" id="ENOG502QRGV">
    <property type="taxonomic scope" value="Eukaryota"/>
</dbReference>
<dbReference type="HOGENOM" id="CLU_012243_9_1_1"/>
<dbReference type="InParanoid" id="Q9SMY7"/>
<dbReference type="PhylomeDB" id="Q9SMY7"/>
<dbReference type="BioCyc" id="ARA:AT4G33220-MONOMER"/>
<dbReference type="UniPathway" id="UPA00545">
    <property type="reaction ID" value="UER00823"/>
</dbReference>
<dbReference type="PRO" id="PR:Q9SMY7"/>
<dbReference type="Proteomes" id="UP000006548">
    <property type="component" value="Chromosome 4"/>
</dbReference>
<dbReference type="ExpressionAtlas" id="Q9SMY7">
    <property type="expression patterns" value="baseline and differential"/>
</dbReference>
<dbReference type="GO" id="GO:0005576">
    <property type="term" value="C:extracellular region"/>
    <property type="evidence" value="ECO:0007669"/>
    <property type="project" value="UniProtKB-KW"/>
</dbReference>
<dbReference type="GO" id="GO:0004857">
    <property type="term" value="F:enzyme inhibitor activity"/>
    <property type="evidence" value="ECO:0007669"/>
    <property type="project" value="InterPro"/>
</dbReference>
<dbReference type="GO" id="GO:0030599">
    <property type="term" value="F:pectinesterase activity"/>
    <property type="evidence" value="ECO:0007669"/>
    <property type="project" value="UniProtKB-EC"/>
</dbReference>
<dbReference type="GO" id="GO:0042545">
    <property type="term" value="P:cell wall modification"/>
    <property type="evidence" value="ECO:0007669"/>
    <property type="project" value="InterPro"/>
</dbReference>
<dbReference type="GO" id="GO:0050829">
    <property type="term" value="P:defense response to Gram-negative bacterium"/>
    <property type="evidence" value="ECO:0000315"/>
    <property type="project" value="TAIR"/>
</dbReference>
<dbReference type="GO" id="GO:0045490">
    <property type="term" value="P:pectin catabolic process"/>
    <property type="evidence" value="ECO:0007669"/>
    <property type="project" value="UniProtKB-UniPathway"/>
</dbReference>
<dbReference type="CDD" id="cd15799">
    <property type="entry name" value="PMEI-like_4"/>
    <property type="match status" value="1"/>
</dbReference>
<dbReference type="FunFam" id="1.20.140.40:FF:000017">
    <property type="entry name" value="Pectinesterase"/>
    <property type="match status" value="1"/>
</dbReference>
<dbReference type="FunFam" id="2.160.20.10:FF:000001">
    <property type="entry name" value="Pectinesterase"/>
    <property type="match status" value="1"/>
</dbReference>
<dbReference type="Gene3D" id="1.20.140.40">
    <property type="entry name" value="Invertase/pectin methylesterase inhibitor family protein"/>
    <property type="match status" value="1"/>
</dbReference>
<dbReference type="Gene3D" id="2.160.20.10">
    <property type="entry name" value="Single-stranded right-handed beta-helix, Pectin lyase-like"/>
    <property type="match status" value="1"/>
</dbReference>
<dbReference type="InterPro" id="IPR035513">
    <property type="entry name" value="Invertase/methylesterase_inhib"/>
</dbReference>
<dbReference type="InterPro" id="IPR012334">
    <property type="entry name" value="Pectin_lyas_fold"/>
</dbReference>
<dbReference type="InterPro" id="IPR011050">
    <property type="entry name" value="Pectin_lyase_fold/virulence"/>
</dbReference>
<dbReference type="InterPro" id="IPR033131">
    <property type="entry name" value="Pectinesterase_Asp_AS"/>
</dbReference>
<dbReference type="InterPro" id="IPR000070">
    <property type="entry name" value="Pectinesterase_cat"/>
</dbReference>
<dbReference type="InterPro" id="IPR006501">
    <property type="entry name" value="Pectinesterase_inhib_dom"/>
</dbReference>
<dbReference type="PANTHER" id="PTHR31707">
    <property type="entry name" value="PECTINESTERASE"/>
    <property type="match status" value="1"/>
</dbReference>
<dbReference type="Pfam" id="PF01095">
    <property type="entry name" value="Pectinesterase"/>
    <property type="match status" value="1"/>
</dbReference>
<dbReference type="Pfam" id="PF04043">
    <property type="entry name" value="PMEI"/>
    <property type="match status" value="1"/>
</dbReference>
<dbReference type="SMART" id="SM00856">
    <property type="entry name" value="PMEI"/>
    <property type="match status" value="1"/>
</dbReference>
<dbReference type="SUPFAM" id="SSF51126">
    <property type="entry name" value="Pectin lyase-like"/>
    <property type="match status" value="1"/>
</dbReference>
<dbReference type="SUPFAM" id="SSF101148">
    <property type="entry name" value="Plant invertase/pectin methylesterase inhibitor"/>
    <property type="match status" value="1"/>
</dbReference>
<dbReference type="PROSITE" id="PS00503">
    <property type="entry name" value="PECTINESTERASE_2"/>
    <property type="match status" value="1"/>
</dbReference>
<comment type="function">
    <text evidence="1">Acts in the modification of cell walls via demethylesterification of cell wall pectin.</text>
</comment>
<comment type="catalytic activity">
    <reaction>
        <text>[(1-&gt;4)-alpha-D-galacturonosyl methyl ester](n) + n H2O = [(1-&gt;4)-alpha-D-galacturonosyl](n) + n methanol + n H(+)</text>
        <dbReference type="Rhea" id="RHEA:22380"/>
        <dbReference type="Rhea" id="RHEA-COMP:14570"/>
        <dbReference type="Rhea" id="RHEA-COMP:14573"/>
        <dbReference type="ChEBI" id="CHEBI:15377"/>
        <dbReference type="ChEBI" id="CHEBI:15378"/>
        <dbReference type="ChEBI" id="CHEBI:17790"/>
        <dbReference type="ChEBI" id="CHEBI:140522"/>
        <dbReference type="ChEBI" id="CHEBI:140523"/>
        <dbReference type="EC" id="3.1.1.11"/>
    </reaction>
</comment>
<comment type="pathway">
    <text>Glycan metabolism; pectin degradation; 2-dehydro-3-deoxy-D-gluconate from pectin: step 1/5.</text>
</comment>
<comment type="subcellular location">
    <subcellularLocation>
        <location evidence="1">Secreted</location>
        <location evidence="1">Cell wall</location>
    </subcellularLocation>
</comment>
<comment type="tissue specificity">
    <text evidence="5">Expressed in siliques.</text>
</comment>
<comment type="developmental stage">
    <text evidence="5">Expressed throughout silique development.</text>
</comment>
<comment type="miscellaneous">
    <text>The PMEI region may act as an autoinhibitory domain and prevent untimely PME activity during transport.</text>
</comment>
<comment type="similarity">
    <text evidence="6">In the N-terminal section; belongs to the PMEI family.</text>
</comment>
<comment type="similarity">
    <text evidence="6">In the C-terminal section; belongs to the pectinesterase family.</text>
</comment>
<comment type="sequence caution" evidence="6">
    <conflict type="erroneous initiation">
        <sequence resource="EMBL-CDS" id="BAD94663"/>
    </conflict>
</comment>
<comment type="sequence caution" evidence="6">
    <conflict type="erroneous gene model prediction">
        <sequence resource="EMBL-CDS" id="CAB36796"/>
    </conflict>
</comment>
<comment type="sequence caution" evidence="6">
    <conflict type="erroneous gene model prediction">
        <sequence resource="EMBL-CDS" id="CAB80039"/>
    </conflict>
</comment>
<accession>Q9SMY7</accession>
<accession>A1L4Y3</accession>
<accession>Q56WM4</accession>
<accession>Q94JL8</accession>
<proteinExistence type="evidence at transcript level"/>
<sequence>MSCLKYFLILLMLGLCVSSEENFQYDYLKVPASEFVSSINTIVVVIRQVSSILSQFADFSGDRRLQNAVSDCLDLLDFSSEELTWSASASENPKGKGNGTGDVGSDTRTWLSAALSNQATCMEGFDGTSGLVKSLVAGSLDQLYSMLRELLPLVQPEQKPKAVSKPGPIAKGPKAPPGRKLRDTDEDESLQFPDWVRPDDRKLLESNGRTYDVSVALDGTGNFTKIMDAIKKAPDYSSTRFVIYIKKGLYLENVEIKKKKWNIVMLGDGIDVTVISGNRSFIDGWTTFRSATFAVSGRGFLARDITFQNTAGPEKHQAVALRSDSDLSVFFRCAMRGYQDTLYTHTMRQFYRECTITGTVDFIFGDGTVVFQNCQILAKRGLPNQKNTITAQGRKDVNQPSGFSIQFSNISADADLVPYLNTTRTYLGRPWKLYSRTVFIRNNMSDVVRPEGWLEWNADFALDTLFYGEFMNYGPGSGLSSRVKWPGYHVFNNSDQANNFTVSQFIKGNLWLPSTGVTFSDGLYI</sequence>
<keyword id="KW-0063">Aspartyl esterase</keyword>
<keyword id="KW-0134">Cell wall</keyword>
<keyword id="KW-0961">Cell wall biogenesis/degradation</keyword>
<keyword id="KW-1015">Disulfide bond</keyword>
<keyword id="KW-0325">Glycoprotein</keyword>
<keyword id="KW-0378">Hydrolase</keyword>
<keyword id="KW-1185">Reference proteome</keyword>
<keyword id="KW-0964">Secreted</keyword>
<keyword id="KW-0732">Signal</keyword>
<gene>
    <name type="primary">PME44</name>
    <name type="synonym">ARATH44</name>
    <name type="ordered locus">At4g33220</name>
    <name type="ORF">F4I10.150</name>
</gene>
<protein>
    <recommendedName>
        <fullName>Probable pectinesterase/pectinesterase inhibitor 44</fullName>
    </recommendedName>
    <domain>
        <recommendedName>
            <fullName>Pectinesterase inhibitor 44</fullName>
        </recommendedName>
        <alternativeName>
            <fullName>Pectin methylesterase inhibitor 44</fullName>
        </alternativeName>
    </domain>
    <domain>
        <recommendedName>
            <fullName>Pectinesterase 44</fullName>
            <shortName>PE 44</shortName>
            <ecNumber>3.1.1.11</ecNumber>
        </recommendedName>
        <alternativeName>
            <fullName>Pectin methylesterase 44</fullName>
            <shortName>AtPME44</shortName>
        </alternativeName>
    </domain>
</protein>
<reference key="1">
    <citation type="journal article" date="1999" name="Nature">
        <title>Sequence and analysis of chromosome 4 of the plant Arabidopsis thaliana.</title>
        <authorList>
            <person name="Mayer K.F.X."/>
            <person name="Schueller C."/>
            <person name="Wambutt R."/>
            <person name="Murphy G."/>
            <person name="Volckaert G."/>
            <person name="Pohl T."/>
            <person name="Duesterhoeft A."/>
            <person name="Stiekema W."/>
            <person name="Entian K.-D."/>
            <person name="Terryn N."/>
            <person name="Harris B."/>
            <person name="Ansorge W."/>
            <person name="Brandt P."/>
            <person name="Grivell L.A."/>
            <person name="Rieger M."/>
            <person name="Weichselgartner M."/>
            <person name="de Simone V."/>
            <person name="Obermaier B."/>
            <person name="Mache R."/>
            <person name="Mueller M."/>
            <person name="Kreis M."/>
            <person name="Delseny M."/>
            <person name="Puigdomenech P."/>
            <person name="Watson M."/>
            <person name="Schmidtheini T."/>
            <person name="Reichert B."/>
            <person name="Portetelle D."/>
            <person name="Perez-Alonso M."/>
            <person name="Boutry M."/>
            <person name="Bancroft I."/>
            <person name="Vos P."/>
            <person name="Hoheisel J."/>
            <person name="Zimmermann W."/>
            <person name="Wedler H."/>
            <person name="Ridley P."/>
            <person name="Langham S.-A."/>
            <person name="McCullagh B."/>
            <person name="Bilham L."/>
            <person name="Robben J."/>
            <person name="van der Schueren J."/>
            <person name="Grymonprez B."/>
            <person name="Chuang Y.-J."/>
            <person name="Vandenbussche F."/>
            <person name="Braeken M."/>
            <person name="Weltjens I."/>
            <person name="Voet M."/>
            <person name="Bastiaens I."/>
            <person name="Aert R."/>
            <person name="Defoor E."/>
            <person name="Weitzenegger T."/>
            <person name="Bothe G."/>
            <person name="Ramsperger U."/>
            <person name="Hilbert H."/>
            <person name="Braun M."/>
            <person name="Holzer E."/>
            <person name="Brandt A."/>
            <person name="Peters S."/>
            <person name="van Staveren M."/>
            <person name="Dirkse W."/>
            <person name="Mooijman P."/>
            <person name="Klein Lankhorst R."/>
            <person name="Rose M."/>
            <person name="Hauf J."/>
            <person name="Koetter P."/>
            <person name="Berneiser S."/>
            <person name="Hempel S."/>
            <person name="Feldpausch M."/>
            <person name="Lamberth S."/>
            <person name="Van den Daele H."/>
            <person name="De Keyser A."/>
            <person name="Buysshaert C."/>
            <person name="Gielen J."/>
            <person name="Villarroel R."/>
            <person name="De Clercq R."/>
            <person name="van Montagu M."/>
            <person name="Rogers J."/>
            <person name="Cronin A."/>
            <person name="Quail M.A."/>
            <person name="Bray-Allen S."/>
            <person name="Clark L."/>
            <person name="Doggett J."/>
            <person name="Hall S."/>
            <person name="Kay M."/>
            <person name="Lennard N."/>
            <person name="McLay K."/>
            <person name="Mayes R."/>
            <person name="Pettett A."/>
            <person name="Rajandream M.A."/>
            <person name="Lyne M."/>
            <person name="Benes V."/>
            <person name="Rechmann S."/>
            <person name="Borkova D."/>
            <person name="Bloecker H."/>
            <person name="Scharfe M."/>
            <person name="Grimm M."/>
            <person name="Loehnert T.-H."/>
            <person name="Dose S."/>
            <person name="de Haan M."/>
            <person name="Maarse A.C."/>
            <person name="Schaefer M."/>
            <person name="Mueller-Auer S."/>
            <person name="Gabel C."/>
            <person name="Fuchs M."/>
            <person name="Fartmann B."/>
            <person name="Granderath K."/>
            <person name="Dauner D."/>
            <person name="Herzl A."/>
            <person name="Neumann S."/>
            <person name="Argiriou A."/>
            <person name="Vitale D."/>
            <person name="Liguori R."/>
            <person name="Piravandi E."/>
            <person name="Massenet O."/>
            <person name="Quigley F."/>
            <person name="Clabauld G."/>
            <person name="Muendlein A."/>
            <person name="Felber R."/>
            <person name="Schnabl S."/>
            <person name="Hiller R."/>
            <person name="Schmidt W."/>
            <person name="Lecharny A."/>
            <person name="Aubourg S."/>
            <person name="Chefdor F."/>
            <person name="Cooke R."/>
            <person name="Berger C."/>
            <person name="Monfort A."/>
            <person name="Casacuberta E."/>
            <person name="Gibbons T."/>
            <person name="Weber N."/>
            <person name="Vandenbol M."/>
            <person name="Bargues M."/>
            <person name="Terol J."/>
            <person name="Torres A."/>
            <person name="Perez-Perez A."/>
            <person name="Purnelle B."/>
            <person name="Bent E."/>
            <person name="Johnson S."/>
            <person name="Tacon D."/>
            <person name="Jesse T."/>
            <person name="Heijnen L."/>
            <person name="Schwarz S."/>
            <person name="Scholler P."/>
            <person name="Heber S."/>
            <person name="Francs P."/>
            <person name="Bielke C."/>
            <person name="Frishman D."/>
            <person name="Haase D."/>
            <person name="Lemcke K."/>
            <person name="Mewes H.-W."/>
            <person name="Stocker S."/>
            <person name="Zaccaria P."/>
            <person name="Bevan M."/>
            <person name="Wilson R.K."/>
            <person name="de la Bastide M."/>
            <person name="Habermann K."/>
            <person name="Parnell L."/>
            <person name="Dedhia N."/>
            <person name="Gnoj L."/>
            <person name="Schutz K."/>
            <person name="Huang E."/>
            <person name="Spiegel L."/>
            <person name="Sekhon M."/>
            <person name="Murray J."/>
            <person name="Sheet P."/>
            <person name="Cordes M."/>
            <person name="Abu-Threideh J."/>
            <person name="Stoneking T."/>
            <person name="Kalicki J."/>
            <person name="Graves T."/>
            <person name="Harmon G."/>
            <person name="Edwards J."/>
            <person name="Latreille P."/>
            <person name="Courtney L."/>
            <person name="Cloud J."/>
            <person name="Abbott A."/>
            <person name="Scott K."/>
            <person name="Johnson D."/>
            <person name="Minx P."/>
            <person name="Bentley D."/>
            <person name="Fulton B."/>
            <person name="Miller N."/>
            <person name="Greco T."/>
            <person name="Kemp K."/>
            <person name="Kramer J."/>
            <person name="Fulton L."/>
            <person name="Mardis E."/>
            <person name="Dante M."/>
            <person name="Pepin K."/>
            <person name="Hillier L.W."/>
            <person name="Nelson J."/>
            <person name="Spieth J."/>
            <person name="Ryan E."/>
            <person name="Andrews S."/>
            <person name="Geisel C."/>
            <person name="Layman D."/>
            <person name="Du H."/>
            <person name="Ali J."/>
            <person name="Berghoff A."/>
            <person name="Jones K."/>
            <person name="Drone K."/>
            <person name="Cotton M."/>
            <person name="Joshu C."/>
            <person name="Antonoiu B."/>
            <person name="Zidanic M."/>
            <person name="Strong C."/>
            <person name="Sun H."/>
            <person name="Lamar B."/>
            <person name="Yordan C."/>
            <person name="Ma P."/>
            <person name="Zhong J."/>
            <person name="Preston R."/>
            <person name="Vil D."/>
            <person name="Shekher M."/>
            <person name="Matero A."/>
            <person name="Shah R."/>
            <person name="Swaby I.K."/>
            <person name="O'Shaughnessy A."/>
            <person name="Rodriguez M."/>
            <person name="Hoffman J."/>
            <person name="Till S."/>
            <person name="Granat S."/>
            <person name="Shohdy N."/>
            <person name="Hasegawa A."/>
            <person name="Hameed A."/>
            <person name="Lodhi M."/>
            <person name="Johnson A."/>
            <person name="Chen E."/>
            <person name="Marra M.A."/>
            <person name="Martienssen R."/>
            <person name="McCombie W.R."/>
        </authorList>
    </citation>
    <scope>NUCLEOTIDE SEQUENCE [LARGE SCALE GENOMIC DNA]</scope>
    <source>
        <strain>cv. Columbia</strain>
    </source>
</reference>
<reference key="2">
    <citation type="journal article" date="2017" name="Plant J.">
        <title>Araport11: a complete reannotation of the Arabidopsis thaliana reference genome.</title>
        <authorList>
            <person name="Cheng C.Y."/>
            <person name="Krishnakumar V."/>
            <person name="Chan A.P."/>
            <person name="Thibaud-Nissen F."/>
            <person name="Schobel S."/>
            <person name="Town C.D."/>
        </authorList>
    </citation>
    <scope>GENOME REANNOTATION</scope>
    <source>
        <strain>cv. Columbia</strain>
    </source>
</reference>
<reference key="3">
    <citation type="journal article" date="2003" name="Science">
        <title>Empirical analysis of transcriptional activity in the Arabidopsis genome.</title>
        <authorList>
            <person name="Yamada K."/>
            <person name="Lim J."/>
            <person name="Dale J.M."/>
            <person name="Chen H."/>
            <person name="Shinn P."/>
            <person name="Palm C.J."/>
            <person name="Southwick A.M."/>
            <person name="Wu H.C."/>
            <person name="Kim C.J."/>
            <person name="Nguyen M."/>
            <person name="Pham P.K."/>
            <person name="Cheuk R.F."/>
            <person name="Karlin-Newmann G."/>
            <person name="Liu S.X."/>
            <person name="Lam B."/>
            <person name="Sakano H."/>
            <person name="Wu T."/>
            <person name="Yu G."/>
            <person name="Miranda M."/>
            <person name="Quach H.L."/>
            <person name="Tripp M."/>
            <person name="Chang C.H."/>
            <person name="Lee J.M."/>
            <person name="Toriumi M.J."/>
            <person name="Chan M.M."/>
            <person name="Tang C.C."/>
            <person name="Onodera C.S."/>
            <person name="Deng J.M."/>
            <person name="Akiyama K."/>
            <person name="Ansari Y."/>
            <person name="Arakawa T."/>
            <person name="Banh J."/>
            <person name="Banno F."/>
            <person name="Bowser L."/>
            <person name="Brooks S.Y."/>
            <person name="Carninci P."/>
            <person name="Chao Q."/>
            <person name="Choy N."/>
            <person name="Enju A."/>
            <person name="Goldsmith A.D."/>
            <person name="Gurjal M."/>
            <person name="Hansen N.F."/>
            <person name="Hayashizaki Y."/>
            <person name="Johnson-Hopson C."/>
            <person name="Hsuan V.W."/>
            <person name="Iida K."/>
            <person name="Karnes M."/>
            <person name="Khan S."/>
            <person name="Koesema E."/>
            <person name="Ishida J."/>
            <person name="Jiang P.X."/>
            <person name="Jones T."/>
            <person name="Kawai J."/>
            <person name="Kamiya A."/>
            <person name="Meyers C."/>
            <person name="Nakajima M."/>
            <person name="Narusaka M."/>
            <person name="Seki M."/>
            <person name="Sakurai T."/>
            <person name="Satou M."/>
            <person name="Tamse R."/>
            <person name="Vaysberg M."/>
            <person name="Wallender E.K."/>
            <person name="Wong C."/>
            <person name="Yamamura Y."/>
            <person name="Yuan S."/>
            <person name="Shinozaki K."/>
            <person name="Davis R.W."/>
            <person name="Theologis A."/>
            <person name="Ecker J.R."/>
        </authorList>
    </citation>
    <scope>NUCLEOTIDE SEQUENCE [LARGE SCALE MRNA]</scope>
    <source>
        <strain>cv. Columbia</strain>
    </source>
</reference>
<reference key="4">
    <citation type="submission" date="2006-12" db="EMBL/GenBank/DDBJ databases">
        <title>Arabidopsis ORF clones.</title>
        <authorList>
            <person name="Bautista V.R."/>
            <person name="Kim C.J."/>
            <person name="Chen H."/>
            <person name="Wu S.Y."/>
            <person name="De Los Reyes C."/>
            <person name="Ecker J.R."/>
        </authorList>
    </citation>
    <scope>NUCLEOTIDE SEQUENCE [LARGE SCALE MRNA] OF 122-525</scope>
    <source>
        <strain>cv. Columbia</strain>
    </source>
</reference>
<reference key="5">
    <citation type="submission" date="2005-03" db="EMBL/GenBank/DDBJ databases">
        <title>Large-scale analysis of RIKEN Arabidopsis full-length (RAFL) cDNAs.</title>
        <authorList>
            <person name="Totoki Y."/>
            <person name="Seki M."/>
            <person name="Ishida J."/>
            <person name="Nakajima M."/>
            <person name="Enju A."/>
            <person name="Kamiya A."/>
            <person name="Narusaka M."/>
            <person name="Shin-i T."/>
            <person name="Nakagawa M."/>
            <person name="Sakamoto N."/>
            <person name="Oishi K."/>
            <person name="Kohara Y."/>
            <person name="Kobayashi M."/>
            <person name="Toyoda A."/>
            <person name="Sakaki Y."/>
            <person name="Sakurai T."/>
            <person name="Iida K."/>
            <person name="Akiyama K."/>
            <person name="Satou M."/>
            <person name="Toyoda T."/>
            <person name="Konagaya A."/>
            <person name="Carninci P."/>
            <person name="Kawai J."/>
            <person name="Hayashizaki Y."/>
            <person name="Shinozaki K."/>
        </authorList>
    </citation>
    <scope>NUCLEOTIDE SEQUENCE [LARGE SCALE MRNA] OF 300-525</scope>
    <source>
        <strain>cv. Columbia</strain>
    </source>
</reference>
<reference key="6">
    <citation type="journal article" date="2004" name="Carbohydr. Res.">
        <title>Pectin methylesterases: sequence-structural features and phylogenetic relationships.</title>
        <authorList>
            <person name="Markovic O."/>
            <person name="Janecek S."/>
        </authorList>
    </citation>
    <scope>GENE FAMILY</scope>
    <scope>NOMENCLATURE</scope>
</reference>
<reference key="7">
    <citation type="journal article" date="2006" name="Planta">
        <title>Comprehensive expression profiling of the pectin methylesterase gene family during silique development in Arabidopsis thaliana.</title>
        <authorList>
            <person name="Louvet R."/>
            <person name="Cavel E."/>
            <person name="Gutierrez L."/>
            <person name="Guenin S."/>
            <person name="Roger D."/>
            <person name="Gillet F."/>
            <person name="Guerineau F."/>
            <person name="Pelloux J."/>
        </authorList>
    </citation>
    <scope>TISSUE SPECIFICITY</scope>
    <scope>DEVELOPMENTAL STAGE</scope>
</reference>
<name>PME44_ARATH</name>
<feature type="signal peptide" evidence="2">
    <location>
        <begin position="1"/>
        <end position="19"/>
    </location>
</feature>
<feature type="chain" id="PRO_0000371693" description="Probable pectinesterase/pectinesterase inhibitor 44">
    <location>
        <begin position="20"/>
        <end position="525"/>
    </location>
</feature>
<feature type="region of interest" description="Pectinesterase inhibitor 44">
    <location>
        <begin position="30"/>
        <end position="153"/>
    </location>
</feature>
<feature type="region of interest" description="Disordered" evidence="4">
    <location>
        <begin position="157"/>
        <end position="192"/>
    </location>
</feature>
<feature type="region of interest" description="Pectinesterase 44">
    <location>
        <begin position="212"/>
        <end position="509"/>
    </location>
</feature>
<feature type="active site" description="Proton donor; for pectinesterase activity" evidence="3">
    <location>
        <position position="340"/>
    </location>
</feature>
<feature type="active site" description="Nucleophile; for pectinesterase activity" evidence="3">
    <location>
        <position position="361"/>
    </location>
</feature>
<feature type="binding site" evidence="1">
    <location>
        <position position="287"/>
    </location>
    <ligand>
        <name>substrate</name>
        <note>for pectinesterase activity</note>
    </ligand>
</feature>
<feature type="binding site" evidence="1">
    <location>
        <position position="317"/>
    </location>
    <ligand>
        <name>substrate</name>
        <note>for pectinesterase activity</note>
    </ligand>
</feature>
<feature type="binding site" evidence="1">
    <location>
        <position position="429"/>
    </location>
    <ligand>
        <name>substrate</name>
        <note>for pectinesterase activity</note>
    </ligand>
</feature>
<feature type="binding site" evidence="1">
    <location>
        <position position="431"/>
    </location>
    <ligand>
        <name>substrate</name>
        <note>for pectinesterase activity</note>
    </ligand>
</feature>
<feature type="site" description="Transition state stabilizer" evidence="1">
    <location>
        <position position="339"/>
    </location>
</feature>
<feature type="glycosylation site" description="N-linked (GlcNAc...) asparagine" evidence="2">
    <location>
        <position position="98"/>
    </location>
</feature>
<feature type="glycosylation site" description="N-linked (GlcNAc...) asparagine" evidence="2">
    <location>
        <position position="222"/>
    </location>
</feature>
<feature type="glycosylation site" description="N-linked (GlcNAc...) asparagine" evidence="2">
    <location>
        <position position="278"/>
    </location>
</feature>
<feature type="glycosylation site" description="N-linked (GlcNAc...) asparagine" evidence="2">
    <location>
        <position position="409"/>
    </location>
</feature>
<feature type="glycosylation site" description="N-linked (GlcNAc...) asparagine" evidence="2">
    <location>
        <position position="421"/>
    </location>
</feature>
<feature type="glycosylation site" description="N-linked (GlcNAc...) asparagine" evidence="2">
    <location>
        <position position="443"/>
    </location>
</feature>
<feature type="glycosylation site" description="N-linked (GlcNAc...) asparagine" evidence="2">
    <location>
        <position position="492"/>
    </location>
</feature>
<feature type="glycosylation site" description="N-linked (GlcNAc...) asparagine" evidence="2">
    <location>
        <position position="499"/>
    </location>
</feature>
<feature type="disulfide bond" evidence="1">
    <location>
        <begin position="354"/>
        <end position="374"/>
    </location>
</feature>
<evidence type="ECO:0000250" key="1"/>
<evidence type="ECO:0000255" key="2"/>
<evidence type="ECO:0000255" key="3">
    <source>
        <dbReference type="PROSITE-ProRule" id="PRU10040"/>
    </source>
</evidence>
<evidence type="ECO:0000256" key="4">
    <source>
        <dbReference type="SAM" id="MobiDB-lite"/>
    </source>
</evidence>
<evidence type="ECO:0000269" key="5">
    <source>
    </source>
</evidence>
<evidence type="ECO:0000305" key="6"/>
<organism>
    <name type="scientific">Arabidopsis thaliana</name>
    <name type="common">Mouse-ear cress</name>
    <dbReference type="NCBI Taxonomy" id="3702"/>
    <lineage>
        <taxon>Eukaryota</taxon>
        <taxon>Viridiplantae</taxon>
        <taxon>Streptophyta</taxon>
        <taxon>Embryophyta</taxon>
        <taxon>Tracheophyta</taxon>
        <taxon>Spermatophyta</taxon>
        <taxon>Magnoliopsida</taxon>
        <taxon>eudicotyledons</taxon>
        <taxon>Gunneridae</taxon>
        <taxon>Pentapetalae</taxon>
        <taxon>rosids</taxon>
        <taxon>malvids</taxon>
        <taxon>Brassicales</taxon>
        <taxon>Brassicaceae</taxon>
        <taxon>Camelineae</taxon>
        <taxon>Arabidopsis</taxon>
    </lineage>
</organism>